<sequence>MKFVDRFRGAVAGMLRRLVVEAMGVALLSALIGVVGSAPAEAFSRPGLPVEYLQVPSPSMGRDIKVQFQNGGANSPALYLLDGLRAQDDFSGWDINTTAFEWYYQSGISVVMPVGGQSSFYSDWYSPACGKAGCQTYKWETFLTSELPQYLQSNKQIKPTGSAAVGLSMAGLSALTLAIYHPDQFIYVGSMSGLLDPSNAMGPSLIGLAMGDAGGYKAADMWGPSTDPAWKRNDPTVNVGTLIANNTRIWMYCGNGKPTELGGNNLPAKLLEGLVRTSNIKFQDGYNAGGGHNAVFNFPDSGTHSWEYWGEQLNDMKPDLQQYLGATPGA</sequence>
<name>A85A_MYCLE</name>
<feature type="signal peptide" evidence="2">
    <location>
        <begin position="1"/>
        <end position="42"/>
    </location>
</feature>
<feature type="chain" id="PRO_0000000213" description="Diacylglycerol acyltransferase/mycolyltransferase Ag85A">
    <location>
        <begin position="43"/>
        <end position="330"/>
    </location>
</feature>
<feature type="region of interest" description="Fibronectin-binding">
    <location>
        <begin position="100"/>
        <end position="110"/>
    </location>
</feature>
<feature type="active site" description="Nucleophile" evidence="1">
    <location>
        <position position="168"/>
    </location>
</feature>
<feature type="active site" evidence="1">
    <location>
        <position position="272"/>
    </location>
</feature>
<feature type="active site" evidence="1">
    <location>
        <position position="304"/>
    </location>
</feature>
<feature type="binding site" evidence="1">
    <location>
        <begin position="84"/>
        <end position="85"/>
    </location>
    <ligand>
        <name>substrate</name>
    </ligand>
</feature>
<feature type="binding site" evidence="1">
    <location>
        <position position="168"/>
    </location>
    <ligand>
        <name>substrate</name>
    </ligand>
</feature>
<feature type="binding site" evidence="1">
    <location>
        <position position="196"/>
    </location>
    <ligand>
        <name>substrate</name>
    </ligand>
</feature>
<feature type="binding site" evidence="1">
    <location>
        <begin position="274"/>
        <end position="277"/>
    </location>
    <ligand>
        <name>substrate</name>
    </ligand>
</feature>
<feature type="binding site" evidence="1">
    <location>
        <position position="281"/>
    </location>
    <ligand>
        <name>substrate</name>
    </ligand>
</feature>
<feature type="binding site" evidence="1">
    <location>
        <begin position="304"/>
        <end position="306"/>
    </location>
    <ligand>
        <name>substrate</name>
    </ligand>
</feature>
<feature type="disulfide bond" evidence="1">
    <location>
        <begin position="129"/>
        <end position="134"/>
    </location>
</feature>
<feature type="sequence conflict" description="In Ref. 1; BAA07864." evidence="3" ref="1">
    <original>Q</original>
    <variation>E</variation>
    <location>
        <position position="149"/>
    </location>
</feature>
<gene>
    <name type="primary">fbpA</name>
    <name type="ordered locus">ML0097</name>
</gene>
<proteinExistence type="inferred from homology"/>
<organism>
    <name type="scientific">Mycobacterium leprae (strain TN)</name>
    <dbReference type="NCBI Taxonomy" id="272631"/>
    <lineage>
        <taxon>Bacteria</taxon>
        <taxon>Bacillati</taxon>
        <taxon>Actinomycetota</taxon>
        <taxon>Actinomycetes</taxon>
        <taxon>Mycobacteriales</taxon>
        <taxon>Mycobacteriaceae</taxon>
        <taxon>Mycobacterium</taxon>
    </lineage>
</organism>
<comment type="function">
    <text evidence="1">The antigen 85 proteins (FbpA, FbpB, FbpC) are responsible for the high affinity of mycobacteria for fibronectin, a large adhesive glycoprotein, which facilitates the attachment of M.tuberculosis to murine alveolar macrophages (AMs). They also help to maintain the integrity of the cell wall by catalyzing the transfer of mycolic acids to cell wall arabinogalactan, and through the synthesis of alpha,alpha-trehalose dimycolate (TDM, cord factor). They catalyze the transfer of a mycoloyl residue from one molecule of alpha,alpha-trehalose monomycolate (TMM) to another TMM, leading to the formation of TDM. FbpA mediates triacylglycerol (TAG) formation with long-chain acyl-CoA as the acyl donor and 1,2-dipalmitoyl-sn-glycerol (1,2-dipalmitin) as the acyl acceptor. It has a preference for C26:0-CoA over C18:1-CoA (By similarity).</text>
</comment>
<comment type="catalytic activity">
    <reaction>
        <text>an acyl-CoA + a 1,2-diacyl-sn-glycerol = a triacyl-sn-glycerol + CoA</text>
        <dbReference type="Rhea" id="RHEA:10868"/>
        <dbReference type="ChEBI" id="CHEBI:17815"/>
        <dbReference type="ChEBI" id="CHEBI:57287"/>
        <dbReference type="ChEBI" id="CHEBI:58342"/>
        <dbReference type="ChEBI" id="CHEBI:64615"/>
        <dbReference type="EC" id="2.3.1.20"/>
    </reaction>
</comment>
<comment type="catalytic activity">
    <reaction>
        <text>2 alpha,alpha'-trehalose 6-mycolate = alpha,alpha'-trehalose 6,6'-bismycolate + alpha,alpha-trehalose</text>
        <dbReference type="Rhea" id="RHEA:23472"/>
        <dbReference type="ChEBI" id="CHEBI:16551"/>
        <dbReference type="ChEBI" id="CHEBI:18195"/>
        <dbReference type="ChEBI" id="CHEBI:18234"/>
        <dbReference type="EC" id="2.3.1.122"/>
    </reaction>
</comment>
<comment type="subunit">
    <text evidence="1">Homodimer.</text>
</comment>
<comment type="subcellular location">
    <subcellularLocation>
        <location>Secreted</location>
        <location>Cell wall</location>
    </subcellularLocation>
    <subcellularLocation>
        <location>Cytoplasm</location>
    </subcellularLocation>
</comment>
<comment type="similarity">
    <text evidence="3">Belongs to the mycobacterial A85 antigen family.</text>
</comment>
<accession>Q05861</accession>
<reference key="1">
    <citation type="journal article" date="1994" name="Kansenshogaku Zasshi">
        <title>Molecular cloning of alpha antigen like protein gene of Mycobacterium leprae and its over production in Escherichia coli.</title>
        <authorList>
            <person name="Yin Y."/>
        </authorList>
    </citation>
    <scope>NUCLEOTIDE SEQUENCE [GENOMIC DNA]</scope>
    <source>
        <strain>Thai53</strain>
    </source>
</reference>
<reference key="2">
    <citation type="submission" date="1996-03" db="EMBL/GenBank/DDBJ databases">
        <authorList>
            <person name="de Mendonca-Lima L."/>
        </authorList>
    </citation>
    <scope>NUCLEOTIDE SEQUENCE [GENOMIC DNA]</scope>
</reference>
<reference key="3">
    <citation type="journal article" date="2001" name="Nature">
        <title>Massive gene decay in the leprosy bacillus.</title>
        <authorList>
            <person name="Cole S.T."/>
            <person name="Eiglmeier K."/>
            <person name="Parkhill J."/>
            <person name="James K.D."/>
            <person name="Thomson N.R."/>
            <person name="Wheeler P.R."/>
            <person name="Honore N."/>
            <person name="Garnier T."/>
            <person name="Churcher C.M."/>
            <person name="Harris D.E."/>
            <person name="Mungall K.L."/>
            <person name="Basham D."/>
            <person name="Brown D."/>
            <person name="Chillingworth T."/>
            <person name="Connor R."/>
            <person name="Davies R.M."/>
            <person name="Devlin K."/>
            <person name="Duthoy S."/>
            <person name="Feltwell T."/>
            <person name="Fraser A."/>
            <person name="Hamlin N."/>
            <person name="Holroyd S."/>
            <person name="Hornsby T."/>
            <person name="Jagels K."/>
            <person name="Lacroix C."/>
            <person name="Maclean J."/>
            <person name="Moule S."/>
            <person name="Murphy L.D."/>
            <person name="Oliver K."/>
            <person name="Quail M.A."/>
            <person name="Rajandream M.A."/>
            <person name="Rutherford K.M."/>
            <person name="Rutter S."/>
            <person name="Seeger K."/>
            <person name="Simon S."/>
            <person name="Simmonds M."/>
            <person name="Skelton J."/>
            <person name="Squares R."/>
            <person name="Squares S."/>
            <person name="Stevens K."/>
            <person name="Taylor K."/>
            <person name="Whitehead S."/>
            <person name="Woodward J.R."/>
            <person name="Barrell B.G."/>
        </authorList>
    </citation>
    <scope>NUCLEOTIDE SEQUENCE [LARGE SCALE GENOMIC DNA]</scope>
    <source>
        <strain>TN</strain>
    </source>
</reference>
<reference key="4">
    <citation type="journal article" date="1993" name="Infect. Immun.">
        <title>The Mycobacterium leprae antigen 85 complex gene family: identification of the genes for the 85A, 85C, and related MPT51 proteins.</title>
        <authorList>
            <person name="Rinke de Wit T.F."/>
            <person name="Bekelie S."/>
            <person name="Osland A."/>
            <person name="Wieles B."/>
            <person name="Janson A.A.M."/>
            <person name="Thole J.E.R."/>
        </authorList>
    </citation>
    <scope>NUCLEOTIDE SEQUENCE [GENOMIC DNA] OF 143-330</scope>
</reference>
<protein>
    <recommendedName>
        <fullName>Diacylglycerol acyltransferase/mycolyltransferase Ag85A</fullName>
        <shortName>DGAT</shortName>
        <ecNumber>2.3.1.122</ecNumber>
        <ecNumber>2.3.1.20</ecNumber>
    </recommendedName>
    <alternativeName>
        <fullName>Acyl-CoA:diacylglycerol acyltransferase</fullName>
    </alternativeName>
    <alternativeName>
        <fullName>Antigen 85 complex A</fullName>
        <shortName>85A</shortName>
        <shortName>Ag85A</shortName>
    </alternativeName>
    <alternativeName>
        <fullName>Fibronectin-binding protein A</fullName>
        <shortName>Fbps A</shortName>
    </alternativeName>
</protein>
<keyword id="KW-0012">Acyltransferase</keyword>
<keyword id="KW-0134">Cell wall</keyword>
<keyword id="KW-0963">Cytoplasm</keyword>
<keyword id="KW-1015">Disulfide bond</keyword>
<keyword id="KW-1185">Reference proteome</keyword>
<keyword id="KW-0964">Secreted</keyword>
<keyword id="KW-0732">Signal</keyword>
<keyword id="KW-0808">Transferase</keyword>
<evidence type="ECO:0000250" key="1"/>
<evidence type="ECO:0000255" key="2"/>
<evidence type="ECO:0000305" key="3"/>
<dbReference type="EC" id="2.3.1.122"/>
<dbReference type="EC" id="2.3.1.20"/>
<dbReference type="EMBL" id="D43841">
    <property type="protein sequence ID" value="BAA07864.1"/>
    <property type="molecule type" value="Genomic_DNA"/>
</dbReference>
<dbReference type="EMBL" id="M90648">
    <property type="protein sequence ID" value="AAA91864.1"/>
    <property type="molecule type" value="Genomic_DNA"/>
</dbReference>
<dbReference type="EMBL" id="AL583917">
    <property type="protein sequence ID" value="CAC29605.1"/>
    <property type="molecule type" value="Genomic_DNA"/>
</dbReference>
<dbReference type="EMBL" id="Z21950">
    <property type="protein sequence ID" value="CAA79948.1"/>
    <property type="molecule type" value="Genomic_DNA"/>
</dbReference>
<dbReference type="PIR" id="A86921">
    <property type="entry name" value="A86921"/>
</dbReference>
<dbReference type="PIR" id="S32107">
    <property type="entry name" value="S32107"/>
</dbReference>
<dbReference type="RefSeq" id="NP_301195.1">
    <property type="nucleotide sequence ID" value="NC_002677.1"/>
</dbReference>
<dbReference type="RefSeq" id="WP_010907520.1">
    <property type="nucleotide sequence ID" value="NC_002677.1"/>
</dbReference>
<dbReference type="SMR" id="Q05861"/>
<dbReference type="STRING" id="272631.gene:17573909"/>
<dbReference type="ESTHER" id="mycle-a85a">
    <property type="family name" value="A85-Mycolyl-transferase"/>
</dbReference>
<dbReference type="KEGG" id="mle:ML0097"/>
<dbReference type="PATRIC" id="fig|272631.5.peg.151"/>
<dbReference type="Leproma" id="ML0097"/>
<dbReference type="eggNOG" id="COG0627">
    <property type="taxonomic scope" value="Bacteria"/>
</dbReference>
<dbReference type="HOGENOM" id="CLU_026624_3_1_11"/>
<dbReference type="OrthoDB" id="4366784at2"/>
<dbReference type="Proteomes" id="UP000000806">
    <property type="component" value="Chromosome"/>
</dbReference>
<dbReference type="GO" id="GO:0005737">
    <property type="term" value="C:cytoplasm"/>
    <property type="evidence" value="ECO:0007669"/>
    <property type="project" value="UniProtKB-SubCell"/>
</dbReference>
<dbReference type="GO" id="GO:0005576">
    <property type="term" value="C:extracellular region"/>
    <property type="evidence" value="ECO:0007669"/>
    <property type="project" value="UniProtKB-KW"/>
</dbReference>
<dbReference type="GO" id="GO:0004144">
    <property type="term" value="F:diacylglycerol O-acyltransferase activity"/>
    <property type="evidence" value="ECO:0007669"/>
    <property type="project" value="UniProtKB-EC"/>
</dbReference>
<dbReference type="GO" id="GO:0050348">
    <property type="term" value="F:trehalose O-mycolyltransferase activity"/>
    <property type="evidence" value="ECO:0007669"/>
    <property type="project" value="UniProtKB-EC"/>
</dbReference>
<dbReference type="FunFam" id="3.40.50.1820:FF:000086">
    <property type="entry name" value="Diacylglycerol acyltransferase/mycolyltransferase Ag85C"/>
    <property type="match status" value="1"/>
</dbReference>
<dbReference type="Gene3D" id="3.40.50.1820">
    <property type="entry name" value="alpha/beta hydrolase"/>
    <property type="match status" value="1"/>
</dbReference>
<dbReference type="InterPro" id="IPR029058">
    <property type="entry name" value="AB_hydrolase_fold"/>
</dbReference>
<dbReference type="InterPro" id="IPR000801">
    <property type="entry name" value="Esterase-like"/>
</dbReference>
<dbReference type="InterPro" id="IPR050583">
    <property type="entry name" value="Mycobacterial_A85_antigen"/>
</dbReference>
<dbReference type="PANTHER" id="PTHR48098:SF1">
    <property type="entry name" value="DIACYLGLYCEROL ACYLTRANSFERASE_MYCOLYLTRANSFERASE AG85A"/>
    <property type="match status" value="1"/>
</dbReference>
<dbReference type="PANTHER" id="PTHR48098">
    <property type="entry name" value="ENTEROCHELIN ESTERASE-RELATED"/>
    <property type="match status" value="1"/>
</dbReference>
<dbReference type="Pfam" id="PF00756">
    <property type="entry name" value="Esterase"/>
    <property type="match status" value="1"/>
</dbReference>
<dbReference type="SUPFAM" id="SSF53474">
    <property type="entry name" value="alpha/beta-Hydrolases"/>
    <property type="match status" value="1"/>
</dbReference>